<geneLocation type="chloroplast"/>
<reference key="1">
    <citation type="journal article" date="2002" name="Nucleic Acids Res.">
        <title>Identification and comparative analysis of the chloroplast alpha-subunit gene of DNA-dependent RNA polymerase from seven Euglena species.</title>
        <authorList>
            <person name="Sheveleva E.V."/>
            <person name="Giordani N.V."/>
            <person name="Hallick R.B."/>
        </authorList>
    </citation>
    <scope>NUCLEOTIDE SEQUENCE [GENOMIC DNA]</scope>
</reference>
<comment type="function">
    <text evidence="1">May control the interaction of photosystem II (PSII) cores with the light-harvesting antenna, regulates electron flow through the 2 photosystem reaction centers. PSII is a light-driven water plastoquinone oxidoreductase, using light energy to abstract electrons from H(2)O, generating a proton gradient subsequently used for ATP formation.</text>
</comment>
<comment type="subunit">
    <text evidence="1">PSII is composed of 1 copy each of membrane proteins PsbA, PsbB, PsbC, PsbD, PsbE, PsbF, PsbH, PsbI, PsbJ, PsbK, PsbL, PsbM, PsbT, PsbY, PsbZ, Psb30/Ycf12, at least 3 peripheral proteins of the oxygen-evolving complex and a large number of cofactors. It forms dimeric complexes.</text>
</comment>
<comment type="subcellular location">
    <subcellularLocation>
        <location evidence="1">Plastid</location>
        <location evidence="1">Chloroplast thylakoid membrane</location>
        <topology evidence="1">Single-pass membrane protein</topology>
    </subcellularLocation>
</comment>
<comment type="similarity">
    <text evidence="3">Belongs to the PsbZ family.</text>
</comment>
<gene>
    <name evidence="3" type="primary">psbZ</name>
    <name type="synonym">ycf9</name>
</gene>
<dbReference type="EMBL" id="AY047483">
    <property type="protein sequence ID" value="AAL83359.1"/>
    <property type="molecule type" value="Genomic_DNA"/>
</dbReference>
<dbReference type="SMR" id="Q8SL95"/>
<dbReference type="GO" id="GO:0009535">
    <property type="term" value="C:chloroplast thylakoid membrane"/>
    <property type="evidence" value="ECO:0007669"/>
    <property type="project" value="UniProtKB-SubCell"/>
</dbReference>
<dbReference type="GO" id="GO:0009539">
    <property type="term" value="C:photosystem II reaction center"/>
    <property type="evidence" value="ECO:0007669"/>
    <property type="project" value="InterPro"/>
</dbReference>
<dbReference type="GO" id="GO:0015979">
    <property type="term" value="P:photosynthesis"/>
    <property type="evidence" value="ECO:0007669"/>
    <property type="project" value="UniProtKB-KW"/>
</dbReference>
<dbReference type="GO" id="GO:0042549">
    <property type="term" value="P:photosystem II stabilization"/>
    <property type="evidence" value="ECO:0007669"/>
    <property type="project" value="InterPro"/>
</dbReference>
<dbReference type="Gene3D" id="1.10.287.740">
    <property type="entry name" value="Photosystem II PsbZ, reaction centre"/>
    <property type="match status" value="1"/>
</dbReference>
<dbReference type="InterPro" id="IPR002644">
    <property type="entry name" value="PSII_PsbZ"/>
</dbReference>
<dbReference type="InterPro" id="IPR036512">
    <property type="entry name" value="PSII_PsbZ_sf"/>
</dbReference>
<dbReference type="Pfam" id="PF01737">
    <property type="entry name" value="Ycf9"/>
    <property type="match status" value="1"/>
</dbReference>
<dbReference type="SUPFAM" id="SSF161055">
    <property type="entry name" value="PsbZ-like"/>
    <property type="match status" value="1"/>
</dbReference>
<accession>Q8SL95</accession>
<organism>
    <name type="scientific">Euglena anabaena</name>
    <name type="common">Euglenaria anabaena</name>
    <dbReference type="NCBI Taxonomy" id="38273"/>
    <lineage>
        <taxon>Eukaryota</taxon>
        <taxon>Discoba</taxon>
        <taxon>Euglenozoa</taxon>
        <taxon>Euglenida</taxon>
        <taxon>Spirocuta</taxon>
        <taxon>Euglenophyceae</taxon>
        <taxon>Euglenales</taxon>
        <taxon>Euglenaceae</taxon>
        <taxon>Euglenaria</taxon>
    </lineage>
</organism>
<evidence type="ECO:0000250" key="1">
    <source>
        <dbReference type="UniProtKB" id="P92276"/>
    </source>
</evidence>
<evidence type="ECO:0000255" key="2"/>
<evidence type="ECO:0000305" key="3"/>
<proteinExistence type="inferred from homology"/>
<feature type="chain" id="PRO_0000217698" description="Photosystem II reaction center protein Z">
    <location>
        <begin position="1" status="less than"/>
        <end position="32"/>
    </location>
</feature>
<feature type="transmembrane region" description="Helical" evidence="2">
    <location>
        <begin position="12"/>
        <end position="32"/>
    </location>
</feature>
<feature type="non-terminal residue">
    <location>
        <position position="1"/>
    </location>
</feature>
<name>PSBZ_EUGAN</name>
<protein>
    <recommendedName>
        <fullName evidence="3">Photosystem II reaction center protein Z</fullName>
        <shortName evidence="3">PSII-Z</shortName>
    </recommendedName>
</protein>
<keyword id="KW-0150">Chloroplast</keyword>
<keyword id="KW-0472">Membrane</keyword>
<keyword id="KW-0602">Photosynthesis</keyword>
<keyword id="KW-0604">Photosystem II</keyword>
<keyword id="KW-0934">Plastid</keyword>
<keyword id="KW-0674">Reaction center</keyword>
<keyword id="KW-0793">Thylakoid</keyword>
<keyword id="KW-0812">Transmembrane</keyword>
<keyword id="KW-1133">Transmembrane helix</keyword>
<sequence>NGWNENKNYILIGSAAWAGLVLLVGTLNYLVI</sequence>